<accession>A0RPV3</accession>
<keyword id="KW-0808">Transferase</keyword>
<keyword id="KW-0819">tRNA processing</keyword>
<name>CMOB_CAMFF</name>
<protein>
    <recommendedName>
        <fullName evidence="1">tRNA U34 carboxymethyltransferase</fullName>
        <ecNumber evidence="1">2.5.1.-</ecNumber>
    </recommendedName>
</protein>
<reference key="1">
    <citation type="submission" date="2006-11" db="EMBL/GenBank/DDBJ databases">
        <title>Sequence of Campylobacter fetus subsp. fetus 82-40.</title>
        <authorList>
            <person name="Fouts D.E."/>
            <person name="Nelson K.E."/>
        </authorList>
    </citation>
    <scope>NUCLEOTIDE SEQUENCE [LARGE SCALE GENOMIC DNA]</scope>
    <source>
        <strain>82-40</strain>
    </source>
</reference>
<comment type="function">
    <text evidence="1">Catalyzes carboxymethyl transfer from carboxy-S-adenosyl-L-methionine (Cx-SAM) to 5-hydroxyuridine (ho5U) to form 5-carboxymethoxyuridine (cmo5U) at position 34 in tRNAs.</text>
</comment>
<comment type="catalytic activity">
    <reaction evidence="1">
        <text>carboxy-S-adenosyl-L-methionine + 5-hydroxyuridine(34) in tRNA = 5-carboxymethoxyuridine(34) in tRNA + S-adenosyl-L-homocysteine + H(+)</text>
        <dbReference type="Rhea" id="RHEA:52848"/>
        <dbReference type="Rhea" id="RHEA-COMP:13381"/>
        <dbReference type="Rhea" id="RHEA-COMP:13383"/>
        <dbReference type="ChEBI" id="CHEBI:15378"/>
        <dbReference type="ChEBI" id="CHEBI:57856"/>
        <dbReference type="ChEBI" id="CHEBI:134278"/>
        <dbReference type="ChEBI" id="CHEBI:136877"/>
        <dbReference type="ChEBI" id="CHEBI:136879"/>
    </reaction>
</comment>
<comment type="subunit">
    <text evidence="1">Homotetramer.</text>
</comment>
<comment type="similarity">
    <text evidence="1">Belongs to the class I-like SAM-binding methyltransferase superfamily. CmoB family.</text>
</comment>
<feature type="chain" id="PRO_0000313903" description="tRNA U34 carboxymethyltransferase">
    <location>
        <begin position="1"/>
        <end position="282"/>
    </location>
</feature>
<feature type="binding site" evidence="1">
    <location>
        <position position="54"/>
    </location>
    <ligand>
        <name>carboxy-S-adenosyl-L-methionine</name>
        <dbReference type="ChEBI" id="CHEBI:134278"/>
    </ligand>
</feature>
<feature type="binding site" evidence="1">
    <location>
        <position position="68"/>
    </location>
    <ligand>
        <name>carboxy-S-adenosyl-L-methionine</name>
        <dbReference type="ChEBI" id="CHEBI:134278"/>
    </ligand>
</feature>
<feature type="binding site" evidence="1">
    <location>
        <position position="73"/>
    </location>
    <ligand>
        <name>carboxy-S-adenosyl-L-methionine</name>
        <dbReference type="ChEBI" id="CHEBI:134278"/>
    </ligand>
</feature>
<feature type="binding site" evidence="1">
    <location>
        <position position="92"/>
    </location>
    <ligand>
        <name>carboxy-S-adenosyl-L-methionine</name>
        <dbReference type="ChEBI" id="CHEBI:134278"/>
    </ligand>
</feature>
<feature type="binding site" evidence="1">
    <location>
        <begin position="114"/>
        <end position="116"/>
    </location>
    <ligand>
        <name>carboxy-S-adenosyl-L-methionine</name>
        <dbReference type="ChEBI" id="CHEBI:134278"/>
    </ligand>
</feature>
<feature type="binding site" evidence="1">
    <location>
        <position position="161"/>
    </location>
    <ligand>
        <name>carboxy-S-adenosyl-L-methionine</name>
        <dbReference type="ChEBI" id="CHEBI:134278"/>
    </ligand>
</feature>
<feature type="binding site" evidence="1">
    <location>
        <position position="276"/>
    </location>
    <ligand>
        <name>carboxy-S-adenosyl-L-methionine</name>
        <dbReference type="ChEBI" id="CHEBI:134278"/>
    </ligand>
</feature>
<gene>
    <name evidence="1" type="primary">cmoB</name>
    <name type="ordered locus">CFF8240_1075</name>
</gene>
<proteinExistence type="inferred from homology"/>
<sequence>MNLINNANKKLFEKINNLKNYSCQVKFSDAIEIEINDFDDNIIDLAKDLKPWRKGPFKLNATLIDSEWQSFIKFNGLKPFLNLKDKIVADVGCNNGYYMFKMLELEPKSIVGFDPSVLSFLQFSFINHFVKSNIKFELLGVQDLPNYNIKFDTILCLGVLYHRSDPIKTLKELKSSLNKGGEVFIDTMFIQRDDEFVLSPKSTYSKIPNIYFIPSIKALRNWCERAKFKTFDILSIKNTDFNEQRKTQWIYGESLENFLDPNDPKLTIEGYPAPKRVYVRLS</sequence>
<organism>
    <name type="scientific">Campylobacter fetus subsp. fetus (strain 82-40)</name>
    <dbReference type="NCBI Taxonomy" id="360106"/>
    <lineage>
        <taxon>Bacteria</taxon>
        <taxon>Pseudomonadati</taxon>
        <taxon>Campylobacterota</taxon>
        <taxon>Epsilonproteobacteria</taxon>
        <taxon>Campylobacterales</taxon>
        <taxon>Campylobacteraceae</taxon>
        <taxon>Campylobacter</taxon>
    </lineage>
</organism>
<dbReference type="EC" id="2.5.1.-" evidence="1"/>
<dbReference type="EMBL" id="CP000487">
    <property type="protein sequence ID" value="ABK82487.1"/>
    <property type="molecule type" value="Genomic_DNA"/>
</dbReference>
<dbReference type="RefSeq" id="WP_011732070.1">
    <property type="nucleotide sequence ID" value="NC_008599.1"/>
</dbReference>
<dbReference type="SMR" id="A0RPV3"/>
<dbReference type="GeneID" id="61064902"/>
<dbReference type="KEGG" id="cff:CFF8240_1075"/>
<dbReference type="PATRIC" id="fig|360106.6.peg.1047"/>
<dbReference type="eggNOG" id="COG0500">
    <property type="taxonomic scope" value="Bacteria"/>
</dbReference>
<dbReference type="HOGENOM" id="CLU_052665_1_0_7"/>
<dbReference type="Proteomes" id="UP000000760">
    <property type="component" value="Chromosome"/>
</dbReference>
<dbReference type="GO" id="GO:0016765">
    <property type="term" value="F:transferase activity, transferring alkyl or aryl (other than methyl) groups"/>
    <property type="evidence" value="ECO:0007669"/>
    <property type="project" value="InterPro"/>
</dbReference>
<dbReference type="GO" id="GO:0002098">
    <property type="term" value="P:tRNA wobble uridine modification"/>
    <property type="evidence" value="ECO:0007669"/>
    <property type="project" value="InterPro"/>
</dbReference>
<dbReference type="CDD" id="cd02440">
    <property type="entry name" value="AdoMet_MTases"/>
    <property type="match status" value="1"/>
</dbReference>
<dbReference type="Gene3D" id="3.40.50.150">
    <property type="entry name" value="Vaccinia Virus protein VP39"/>
    <property type="match status" value="1"/>
</dbReference>
<dbReference type="HAMAP" id="MF_01590">
    <property type="entry name" value="tRNA_carboxymethyltr_CmoB"/>
    <property type="match status" value="1"/>
</dbReference>
<dbReference type="InterPro" id="IPR010017">
    <property type="entry name" value="CmoB"/>
</dbReference>
<dbReference type="InterPro" id="IPR027555">
    <property type="entry name" value="Mo5U34_MeTrfas-like"/>
</dbReference>
<dbReference type="InterPro" id="IPR029063">
    <property type="entry name" value="SAM-dependent_MTases_sf"/>
</dbReference>
<dbReference type="NCBIfam" id="NF011650">
    <property type="entry name" value="PRK15068.1"/>
    <property type="match status" value="1"/>
</dbReference>
<dbReference type="NCBIfam" id="TIGR00452">
    <property type="entry name" value="tRNA 5-methoxyuridine(34)/uridine 5-oxyacetic acid(34) synthase CmoB"/>
    <property type="match status" value="1"/>
</dbReference>
<dbReference type="Pfam" id="PF08003">
    <property type="entry name" value="Methyltransf_9"/>
    <property type="match status" value="1"/>
</dbReference>
<dbReference type="SUPFAM" id="SSF53335">
    <property type="entry name" value="S-adenosyl-L-methionine-dependent methyltransferases"/>
    <property type="match status" value="1"/>
</dbReference>
<evidence type="ECO:0000255" key="1">
    <source>
        <dbReference type="HAMAP-Rule" id="MF_01590"/>
    </source>
</evidence>